<name>NADK_CAMJD</name>
<protein>
    <recommendedName>
        <fullName evidence="1">NAD kinase</fullName>
        <ecNumber evidence="1">2.7.1.23</ecNumber>
    </recommendedName>
    <alternativeName>
        <fullName evidence="1">ATP-dependent NAD kinase</fullName>
    </alternativeName>
</protein>
<proteinExistence type="inferred from homology"/>
<comment type="function">
    <text evidence="1">Involved in the regulation of the intracellular balance of NAD and NADP, and is a key enzyme in the biosynthesis of NADP. Catalyzes specifically the phosphorylation on 2'-hydroxyl of the adenosine moiety of NAD to yield NADP.</text>
</comment>
<comment type="catalytic activity">
    <reaction evidence="1">
        <text>NAD(+) + ATP = ADP + NADP(+) + H(+)</text>
        <dbReference type="Rhea" id="RHEA:18629"/>
        <dbReference type="ChEBI" id="CHEBI:15378"/>
        <dbReference type="ChEBI" id="CHEBI:30616"/>
        <dbReference type="ChEBI" id="CHEBI:57540"/>
        <dbReference type="ChEBI" id="CHEBI:58349"/>
        <dbReference type="ChEBI" id="CHEBI:456216"/>
        <dbReference type="EC" id="2.7.1.23"/>
    </reaction>
</comment>
<comment type="cofactor">
    <cofactor evidence="1">
        <name>a divalent metal cation</name>
        <dbReference type="ChEBI" id="CHEBI:60240"/>
    </cofactor>
</comment>
<comment type="subcellular location">
    <subcellularLocation>
        <location evidence="1">Cytoplasm</location>
    </subcellularLocation>
</comment>
<comment type="similarity">
    <text evidence="1">Belongs to the NAD kinase family.</text>
</comment>
<gene>
    <name evidence="1" type="primary">nadK</name>
    <name type="ordered locus">JJD26997_1358</name>
</gene>
<evidence type="ECO:0000255" key="1">
    <source>
        <dbReference type="HAMAP-Rule" id="MF_00361"/>
    </source>
</evidence>
<keyword id="KW-0067">ATP-binding</keyword>
<keyword id="KW-0963">Cytoplasm</keyword>
<keyword id="KW-0418">Kinase</keyword>
<keyword id="KW-0520">NAD</keyword>
<keyword id="KW-0521">NADP</keyword>
<keyword id="KW-0547">Nucleotide-binding</keyword>
<keyword id="KW-0808">Transferase</keyword>
<organism>
    <name type="scientific">Campylobacter jejuni subsp. doylei (strain ATCC BAA-1458 / RM4099 / 269.97)</name>
    <dbReference type="NCBI Taxonomy" id="360109"/>
    <lineage>
        <taxon>Bacteria</taxon>
        <taxon>Pseudomonadati</taxon>
        <taxon>Campylobacterota</taxon>
        <taxon>Epsilonproteobacteria</taxon>
        <taxon>Campylobacterales</taxon>
        <taxon>Campylobacteraceae</taxon>
        <taxon>Campylobacter</taxon>
    </lineage>
</organism>
<dbReference type="EC" id="2.7.1.23" evidence="1"/>
<dbReference type="EMBL" id="CP000768">
    <property type="protein sequence ID" value="ABS44357.1"/>
    <property type="molecule type" value="Genomic_DNA"/>
</dbReference>
<dbReference type="SMR" id="A7H4H1"/>
<dbReference type="KEGG" id="cjd:JJD26997_1358"/>
<dbReference type="HOGENOM" id="CLU_008831_0_3_7"/>
<dbReference type="Proteomes" id="UP000002302">
    <property type="component" value="Chromosome"/>
</dbReference>
<dbReference type="GO" id="GO:0005737">
    <property type="term" value="C:cytoplasm"/>
    <property type="evidence" value="ECO:0007669"/>
    <property type="project" value="UniProtKB-SubCell"/>
</dbReference>
<dbReference type="GO" id="GO:0005524">
    <property type="term" value="F:ATP binding"/>
    <property type="evidence" value="ECO:0007669"/>
    <property type="project" value="UniProtKB-KW"/>
</dbReference>
<dbReference type="GO" id="GO:0046872">
    <property type="term" value="F:metal ion binding"/>
    <property type="evidence" value="ECO:0007669"/>
    <property type="project" value="UniProtKB-UniRule"/>
</dbReference>
<dbReference type="GO" id="GO:0051287">
    <property type="term" value="F:NAD binding"/>
    <property type="evidence" value="ECO:0007669"/>
    <property type="project" value="UniProtKB-ARBA"/>
</dbReference>
<dbReference type="GO" id="GO:0003951">
    <property type="term" value="F:NAD+ kinase activity"/>
    <property type="evidence" value="ECO:0007669"/>
    <property type="project" value="UniProtKB-UniRule"/>
</dbReference>
<dbReference type="GO" id="GO:0019674">
    <property type="term" value="P:NAD metabolic process"/>
    <property type="evidence" value="ECO:0007669"/>
    <property type="project" value="InterPro"/>
</dbReference>
<dbReference type="GO" id="GO:0006741">
    <property type="term" value="P:NADP biosynthetic process"/>
    <property type="evidence" value="ECO:0007669"/>
    <property type="project" value="UniProtKB-UniRule"/>
</dbReference>
<dbReference type="Gene3D" id="3.40.50.10330">
    <property type="entry name" value="Probable inorganic polyphosphate/atp-NAD kinase, domain 1"/>
    <property type="match status" value="1"/>
</dbReference>
<dbReference type="Gene3D" id="2.60.200.30">
    <property type="entry name" value="Probable inorganic polyphosphate/atp-NAD kinase, domain 2"/>
    <property type="match status" value="1"/>
</dbReference>
<dbReference type="HAMAP" id="MF_00361">
    <property type="entry name" value="NAD_kinase"/>
    <property type="match status" value="1"/>
</dbReference>
<dbReference type="InterPro" id="IPR017438">
    <property type="entry name" value="ATP-NAD_kinase_N"/>
</dbReference>
<dbReference type="InterPro" id="IPR017437">
    <property type="entry name" value="ATP-NAD_kinase_PpnK-typ_C"/>
</dbReference>
<dbReference type="InterPro" id="IPR016064">
    <property type="entry name" value="NAD/diacylglycerol_kinase_sf"/>
</dbReference>
<dbReference type="InterPro" id="IPR002504">
    <property type="entry name" value="NADK"/>
</dbReference>
<dbReference type="NCBIfam" id="NF010679">
    <property type="entry name" value="PRK14077.1"/>
    <property type="match status" value="1"/>
</dbReference>
<dbReference type="PANTHER" id="PTHR20275">
    <property type="entry name" value="NAD KINASE"/>
    <property type="match status" value="1"/>
</dbReference>
<dbReference type="PANTHER" id="PTHR20275:SF0">
    <property type="entry name" value="NAD KINASE"/>
    <property type="match status" value="1"/>
</dbReference>
<dbReference type="Pfam" id="PF01513">
    <property type="entry name" value="NAD_kinase"/>
    <property type="match status" value="1"/>
</dbReference>
<dbReference type="Pfam" id="PF20143">
    <property type="entry name" value="NAD_kinase_C"/>
    <property type="match status" value="1"/>
</dbReference>
<dbReference type="SUPFAM" id="SSF111331">
    <property type="entry name" value="NAD kinase/diacylglycerol kinase-like"/>
    <property type="match status" value="1"/>
</dbReference>
<feature type="chain" id="PRO_1000005399" description="NAD kinase">
    <location>
        <begin position="1"/>
        <end position="286"/>
    </location>
</feature>
<feature type="active site" description="Proton acceptor" evidence="1">
    <location>
        <position position="74"/>
    </location>
</feature>
<feature type="binding site" evidence="1">
    <location>
        <begin position="74"/>
        <end position="75"/>
    </location>
    <ligand>
        <name>NAD(+)</name>
        <dbReference type="ChEBI" id="CHEBI:57540"/>
    </ligand>
</feature>
<feature type="binding site" evidence="1">
    <location>
        <begin position="148"/>
        <end position="149"/>
    </location>
    <ligand>
        <name>NAD(+)</name>
        <dbReference type="ChEBI" id="CHEBI:57540"/>
    </ligand>
</feature>
<feature type="binding site" evidence="1">
    <location>
        <position position="178"/>
    </location>
    <ligand>
        <name>NAD(+)</name>
        <dbReference type="ChEBI" id="CHEBI:57540"/>
    </ligand>
</feature>
<feature type="binding site" evidence="1">
    <location>
        <position position="186"/>
    </location>
    <ligand>
        <name>NAD(+)</name>
        <dbReference type="ChEBI" id="CHEBI:57540"/>
    </ligand>
</feature>
<feature type="binding site" evidence="1">
    <location>
        <begin position="189"/>
        <end position="194"/>
    </location>
    <ligand>
        <name>NAD(+)</name>
        <dbReference type="ChEBI" id="CHEBI:57540"/>
    </ligand>
</feature>
<feature type="binding site" evidence="1">
    <location>
        <position position="244"/>
    </location>
    <ligand>
        <name>NAD(+)</name>
        <dbReference type="ChEBI" id="CHEBI:57540"/>
    </ligand>
</feature>
<sequence>MQNKIDHKNIKKIGLVTRPNVSLDKEILKLQSILSIYKVELVLFKESSEILDLPKYGLDDLFKISDFVISLGGDGTLISLCRKACEYDKAVLGIHAGHLGFLTDFKVDEAENFFQAFFQGEFRIEKPYLLSVFLEDKQGKILEKLAFNDVVISKNNQAPMAHIEVFRKEKKFNEYFGDGLIVATPAGSTAYNLSANGPIVYTLAQAFILTPVCSHSLTQRSIVLPKGFEIEIMAKDCILCIDGQENYKMNDFKSIKVGLSDKNVALIHPKNRDYFQILKEKLHWGN</sequence>
<reference key="1">
    <citation type="submission" date="2007-07" db="EMBL/GenBank/DDBJ databases">
        <title>Complete genome sequence of Campylobacter jejuni subsp doylei 269.97 isolated from human blood.</title>
        <authorList>
            <person name="Fouts D.E."/>
            <person name="Mongodin E.F."/>
            <person name="Puiu D."/>
            <person name="Sebastian Y."/>
            <person name="Miller W.G."/>
            <person name="Mandrell R.E."/>
            <person name="Lastovica A.J."/>
            <person name="Nelson K.E."/>
        </authorList>
    </citation>
    <scope>NUCLEOTIDE SEQUENCE [LARGE SCALE GENOMIC DNA]</scope>
    <source>
        <strain>ATCC BAA-1458 / RM4099 / 269.97</strain>
    </source>
</reference>
<accession>A7H4H1</accession>